<sequence length="367" mass="41043">MDAEQINQIGATLADLSARTADLRRYLDYDAKAERLRTVNASLEDPNVWNDPKKAQELGREKKSLDDVVVTLDRLTSGLSDNTELYEMSKEDGDMDGLQSIADDAAALETDIKQLEFRRMFNNPADPLNAFVDIQAGAGGTEACDWASMLLRQYLKYAERKGFKTQIEDETPGDTAGIKGATIKVEGDYAFGLLRTETGVHRLVRKSPFDSSGGRHTSFASIFVYPEIDDSIEIEINPADVRTDTFRASGAGGQHINKTDSAVRLTHIPTGIVVQCQDGRSQHSNRDVAWKRLRSRLYDHEMRKRQEEQQKLEDSKTDVGWGHQIRSYVLDNSRIKDLRTNVEVSATQKVLDGDLDVFIEASLKQGV</sequence>
<comment type="function">
    <text evidence="1">Peptide chain release factor 2 directs the termination of translation in response to the peptide chain termination codons UGA and UAA.</text>
</comment>
<comment type="subcellular location">
    <subcellularLocation>
        <location evidence="1">Cytoplasm</location>
    </subcellularLocation>
</comment>
<comment type="PTM">
    <text evidence="1">Methylated by PrmC. Methylation increases the termination efficiency of RF2.</text>
</comment>
<comment type="similarity">
    <text evidence="1">Belongs to the prokaryotic/mitochondrial release factor family.</text>
</comment>
<accession>C5CUX0</accession>
<gene>
    <name evidence="1" type="primary">prfB</name>
    <name type="ordered locus">Vapar_3791</name>
</gene>
<organism>
    <name type="scientific">Variovorax paradoxus (strain S110)</name>
    <dbReference type="NCBI Taxonomy" id="543728"/>
    <lineage>
        <taxon>Bacteria</taxon>
        <taxon>Pseudomonadati</taxon>
        <taxon>Pseudomonadota</taxon>
        <taxon>Betaproteobacteria</taxon>
        <taxon>Burkholderiales</taxon>
        <taxon>Comamonadaceae</taxon>
        <taxon>Variovorax</taxon>
    </lineage>
</organism>
<reference key="1">
    <citation type="journal article" date="2011" name="J. Bacteriol.">
        <title>Complete genome sequence of the metabolically versatile plant growth-promoting endophyte, Variovorax paradoxus S110.</title>
        <authorList>
            <person name="Han J.I."/>
            <person name="Choi H.K."/>
            <person name="Lee S.W."/>
            <person name="Orwin P.M."/>
            <person name="Kim J."/>
            <person name="Laroe S.L."/>
            <person name="Kim T.G."/>
            <person name="O'Neil J."/>
            <person name="Leadbetter J.R."/>
            <person name="Lee S.Y."/>
            <person name="Hur C.G."/>
            <person name="Spain J.C."/>
            <person name="Ovchinnikova G."/>
            <person name="Goodwin L."/>
            <person name="Han C."/>
        </authorList>
    </citation>
    <scope>NUCLEOTIDE SEQUENCE [LARGE SCALE GENOMIC DNA]</scope>
    <source>
        <strain>S110</strain>
    </source>
</reference>
<feature type="chain" id="PRO_1000202716" description="Peptide chain release factor 2">
    <location>
        <begin position="1"/>
        <end position="367"/>
    </location>
</feature>
<feature type="modified residue" description="N5-methylglutamine" evidence="1">
    <location>
        <position position="254"/>
    </location>
</feature>
<name>RF2_VARPS</name>
<proteinExistence type="inferred from homology"/>
<evidence type="ECO:0000255" key="1">
    <source>
        <dbReference type="HAMAP-Rule" id="MF_00094"/>
    </source>
</evidence>
<dbReference type="EMBL" id="CP001635">
    <property type="protein sequence ID" value="ACS20406.1"/>
    <property type="molecule type" value="Genomic_DNA"/>
</dbReference>
<dbReference type="SMR" id="C5CUX0"/>
<dbReference type="STRING" id="543728.Vapar_3791"/>
<dbReference type="KEGG" id="vap:Vapar_3791"/>
<dbReference type="eggNOG" id="COG1186">
    <property type="taxonomic scope" value="Bacteria"/>
</dbReference>
<dbReference type="HOGENOM" id="CLU_220733_0_0_4"/>
<dbReference type="OrthoDB" id="9806673at2"/>
<dbReference type="GO" id="GO:0005737">
    <property type="term" value="C:cytoplasm"/>
    <property type="evidence" value="ECO:0007669"/>
    <property type="project" value="UniProtKB-SubCell"/>
</dbReference>
<dbReference type="GO" id="GO:0016149">
    <property type="term" value="F:translation release factor activity, codon specific"/>
    <property type="evidence" value="ECO:0007669"/>
    <property type="project" value="UniProtKB-UniRule"/>
</dbReference>
<dbReference type="FunFam" id="3.30.160.20:FF:000010">
    <property type="entry name" value="Peptide chain release factor 2"/>
    <property type="match status" value="1"/>
</dbReference>
<dbReference type="Gene3D" id="3.30.160.20">
    <property type="match status" value="1"/>
</dbReference>
<dbReference type="Gene3D" id="3.30.70.1660">
    <property type="match status" value="1"/>
</dbReference>
<dbReference type="Gene3D" id="1.20.58.410">
    <property type="entry name" value="Release factor"/>
    <property type="match status" value="1"/>
</dbReference>
<dbReference type="HAMAP" id="MF_00094">
    <property type="entry name" value="Rel_fac_2"/>
    <property type="match status" value="1"/>
</dbReference>
<dbReference type="InterPro" id="IPR005139">
    <property type="entry name" value="PCRF"/>
</dbReference>
<dbReference type="InterPro" id="IPR000352">
    <property type="entry name" value="Pep_chain_release_fac_I"/>
</dbReference>
<dbReference type="InterPro" id="IPR045853">
    <property type="entry name" value="Pep_chain_release_fac_I_sf"/>
</dbReference>
<dbReference type="InterPro" id="IPR004374">
    <property type="entry name" value="PrfB"/>
</dbReference>
<dbReference type="NCBIfam" id="TIGR00020">
    <property type="entry name" value="prfB"/>
    <property type="match status" value="1"/>
</dbReference>
<dbReference type="PANTHER" id="PTHR43116:SF3">
    <property type="entry name" value="CLASS I PEPTIDE CHAIN RELEASE FACTOR"/>
    <property type="match status" value="1"/>
</dbReference>
<dbReference type="PANTHER" id="PTHR43116">
    <property type="entry name" value="PEPTIDE CHAIN RELEASE FACTOR 2"/>
    <property type="match status" value="1"/>
</dbReference>
<dbReference type="Pfam" id="PF03462">
    <property type="entry name" value="PCRF"/>
    <property type="match status" value="1"/>
</dbReference>
<dbReference type="Pfam" id="PF00472">
    <property type="entry name" value="RF-1"/>
    <property type="match status" value="1"/>
</dbReference>
<dbReference type="SMART" id="SM00937">
    <property type="entry name" value="PCRF"/>
    <property type="match status" value="1"/>
</dbReference>
<dbReference type="SUPFAM" id="SSF75620">
    <property type="entry name" value="Release factor"/>
    <property type="match status" value="1"/>
</dbReference>
<dbReference type="PROSITE" id="PS00745">
    <property type="entry name" value="RF_PROK_I"/>
    <property type="match status" value="1"/>
</dbReference>
<keyword id="KW-0963">Cytoplasm</keyword>
<keyword id="KW-0488">Methylation</keyword>
<keyword id="KW-0648">Protein biosynthesis</keyword>
<protein>
    <recommendedName>
        <fullName evidence="1">Peptide chain release factor 2</fullName>
        <shortName evidence="1">RF-2</shortName>
    </recommendedName>
</protein>